<evidence type="ECO:0000250" key="1">
    <source>
        <dbReference type="UniProtKB" id="P28007"/>
    </source>
</evidence>
<evidence type="ECO:0000250" key="2">
    <source>
        <dbReference type="UniProtKB" id="Q9NY12"/>
    </source>
</evidence>
<evidence type="ECO:0000256" key="3">
    <source>
        <dbReference type="SAM" id="MobiDB-lite"/>
    </source>
</evidence>
<evidence type="ECO:0000269" key="4">
    <source>
    </source>
</evidence>
<evidence type="ECO:0000303" key="5">
    <source>
    </source>
</evidence>
<evidence type="ECO:0000305" key="6"/>
<evidence type="ECO:0000305" key="7">
    <source>
    </source>
</evidence>
<evidence type="ECO:0000312" key="8">
    <source>
        <dbReference type="FlyBase" id="FBgn0011824"/>
    </source>
</evidence>
<evidence type="ECO:0000312" key="9">
    <source>
        <dbReference type="Proteomes" id="UP000000803"/>
    </source>
</evidence>
<keyword id="KW-0539">Nucleus</keyword>
<keyword id="KW-1185">Reference proteome</keyword>
<keyword id="KW-0677">Repeat</keyword>
<keyword id="KW-0687">Ribonucleoprotein</keyword>
<keyword id="KW-0690">Ribosome biogenesis</keyword>
<keyword id="KW-0694">RNA-binding</keyword>
<keyword id="KW-0698">rRNA processing</keyword>
<reference key="1">
    <citation type="submission" date="1994-07" db="EMBL/GenBank/DDBJ databases">
        <title>A variety of different glycine repeats in Drosophila gene.</title>
        <authorList>
            <person name="Parchment C."/>
            <person name="Hughes D.M."/>
            <person name="Lloyd P."/>
            <person name="Flavell A.J."/>
        </authorList>
    </citation>
    <scope>NUCLEOTIDE SEQUENCE [MRNA]</scope>
</reference>
<reference key="2">
    <citation type="journal article" date="2000" name="Science">
        <title>The genome sequence of Drosophila melanogaster.</title>
        <authorList>
            <person name="Adams M.D."/>
            <person name="Celniker S.E."/>
            <person name="Holt R.A."/>
            <person name="Evans C.A."/>
            <person name="Gocayne J.D."/>
            <person name="Amanatides P.G."/>
            <person name="Scherer S.E."/>
            <person name="Li P.W."/>
            <person name="Hoskins R.A."/>
            <person name="Galle R.F."/>
            <person name="George R.A."/>
            <person name="Lewis S.E."/>
            <person name="Richards S."/>
            <person name="Ashburner M."/>
            <person name="Henderson S.N."/>
            <person name="Sutton G.G."/>
            <person name="Wortman J.R."/>
            <person name="Yandell M.D."/>
            <person name="Zhang Q."/>
            <person name="Chen L.X."/>
            <person name="Brandon R.C."/>
            <person name="Rogers Y.-H.C."/>
            <person name="Blazej R.G."/>
            <person name="Champe M."/>
            <person name="Pfeiffer B.D."/>
            <person name="Wan K.H."/>
            <person name="Doyle C."/>
            <person name="Baxter E.G."/>
            <person name="Helt G."/>
            <person name="Nelson C.R."/>
            <person name="Miklos G.L.G."/>
            <person name="Abril J.F."/>
            <person name="Agbayani A."/>
            <person name="An H.-J."/>
            <person name="Andrews-Pfannkoch C."/>
            <person name="Baldwin D."/>
            <person name="Ballew R.M."/>
            <person name="Basu A."/>
            <person name="Baxendale J."/>
            <person name="Bayraktaroglu L."/>
            <person name="Beasley E.M."/>
            <person name="Beeson K.Y."/>
            <person name="Benos P.V."/>
            <person name="Berman B.P."/>
            <person name="Bhandari D."/>
            <person name="Bolshakov S."/>
            <person name="Borkova D."/>
            <person name="Botchan M.R."/>
            <person name="Bouck J."/>
            <person name="Brokstein P."/>
            <person name="Brottier P."/>
            <person name="Burtis K.C."/>
            <person name="Busam D.A."/>
            <person name="Butler H."/>
            <person name="Cadieu E."/>
            <person name="Center A."/>
            <person name="Chandra I."/>
            <person name="Cherry J.M."/>
            <person name="Cawley S."/>
            <person name="Dahlke C."/>
            <person name="Davenport L.B."/>
            <person name="Davies P."/>
            <person name="de Pablos B."/>
            <person name="Delcher A."/>
            <person name="Deng Z."/>
            <person name="Mays A.D."/>
            <person name="Dew I."/>
            <person name="Dietz S.M."/>
            <person name="Dodson K."/>
            <person name="Doup L.E."/>
            <person name="Downes M."/>
            <person name="Dugan-Rocha S."/>
            <person name="Dunkov B.C."/>
            <person name="Dunn P."/>
            <person name="Durbin K.J."/>
            <person name="Evangelista C.C."/>
            <person name="Ferraz C."/>
            <person name="Ferriera S."/>
            <person name="Fleischmann W."/>
            <person name="Fosler C."/>
            <person name="Gabrielian A.E."/>
            <person name="Garg N.S."/>
            <person name="Gelbart W.M."/>
            <person name="Glasser K."/>
            <person name="Glodek A."/>
            <person name="Gong F."/>
            <person name="Gorrell J.H."/>
            <person name="Gu Z."/>
            <person name="Guan P."/>
            <person name="Harris M."/>
            <person name="Harris N.L."/>
            <person name="Harvey D.A."/>
            <person name="Heiman T.J."/>
            <person name="Hernandez J.R."/>
            <person name="Houck J."/>
            <person name="Hostin D."/>
            <person name="Houston K.A."/>
            <person name="Howland T.J."/>
            <person name="Wei M.-H."/>
            <person name="Ibegwam C."/>
            <person name="Jalali M."/>
            <person name="Kalush F."/>
            <person name="Karpen G.H."/>
            <person name="Ke Z."/>
            <person name="Kennison J.A."/>
            <person name="Ketchum K.A."/>
            <person name="Kimmel B.E."/>
            <person name="Kodira C.D."/>
            <person name="Kraft C.L."/>
            <person name="Kravitz S."/>
            <person name="Kulp D."/>
            <person name="Lai Z."/>
            <person name="Lasko P."/>
            <person name="Lei Y."/>
            <person name="Levitsky A.A."/>
            <person name="Li J.H."/>
            <person name="Li Z."/>
            <person name="Liang Y."/>
            <person name="Lin X."/>
            <person name="Liu X."/>
            <person name="Mattei B."/>
            <person name="McIntosh T.C."/>
            <person name="McLeod M.P."/>
            <person name="McPherson D."/>
            <person name="Merkulov G."/>
            <person name="Milshina N.V."/>
            <person name="Mobarry C."/>
            <person name="Morris J."/>
            <person name="Moshrefi A."/>
            <person name="Mount S.M."/>
            <person name="Moy M."/>
            <person name="Murphy B."/>
            <person name="Murphy L."/>
            <person name="Muzny D.M."/>
            <person name="Nelson D.L."/>
            <person name="Nelson D.R."/>
            <person name="Nelson K.A."/>
            <person name="Nixon K."/>
            <person name="Nusskern D.R."/>
            <person name="Pacleb J.M."/>
            <person name="Palazzolo M."/>
            <person name="Pittman G.S."/>
            <person name="Pan S."/>
            <person name="Pollard J."/>
            <person name="Puri V."/>
            <person name="Reese M.G."/>
            <person name="Reinert K."/>
            <person name="Remington K."/>
            <person name="Saunders R.D.C."/>
            <person name="Scheeler F."/>
            <person name="Shen H."/>
            <person name="Shue B.C."/>
            <person name="Siden-Kiamos I."/>
            <person name="Simpson M."/>
            <person name="Skupski M.P."/>
            <person name="Smith T.J."/>
            <person name="Spier E."/>
            <person name="Spradling A.C."/>
            <person name="Stapleton M."/>
            <person name="Strong R."/>
            <person name="Sun E."/>
            <person name="Svirskas R."/>
            <person name="Tector C."/>
            <person name="Turner R."/>
            <person name="Venter E."/>
            <person name="Wang A.H."/>
            <person name="Wang X."/>
            <person name="Wang Z.-Y."/>
            <person name="Wassarman D.A."/>
            <person name="Weinstock G.M."/>
            <person name="Weissenbach J."/>
            <person name="Williams S.M."/>
            <person name="Woodage T."/>
            <person name="Worley K.C."/>
            <person name="Wu D."/>
            <person name="Yang S."/>
            <person name="Yao Q.A."/>
            <person name="Ye J."/>
            <person name="Yeh R.-F."/>
            <person name="Zaveri J.S."/>
            <person name="Zhan M."/>
            <person name="Zhang G."/>
            <person name="Zhao Q."/>
            <person name="Zheng L."/>
            <person name="Zheng X.H."/>
            <person name="Zhong F.N."/>
            <person name="Zhong W."/>
            <person name="Zhou X."/>
            <person name="Zhu S.C."/>
            <person name="Zhu X."/>
            <person name="Smith H.O."/>
            <person name="Gibbs R.A."/>
            <person name="Myers E.W."/>
            <person name="Rubin G.M."/>
            <person name="Venter J.C."/>
        </authorList>
    </citation>
    <scope>NUCLEOTIDE SEQUENCE [LARGE SCALE GENOMIC DNA]</scope>
    <source>
        <strain>Berkeley</strain>
    </source>
</reference>
<reference key="3">
    <citation type="journal article" date="2002" name="Genome Biol.">
        <title>Annotation of the Drosophila melanogaster euchromatic genome: a systematic review.</title>
        <authorList>
            <person name="Misra S."/>
            <person name="Crosby M.A."/>
            <person name="Mungall C.J."/>
            <person name="Matthews B.B."/>
            <person name="Campbell K.S."/>
            <person name="Hradecky P."/>
            <person name="Huang Y."/>
            <person name="Kaminker J.S."/>
            <person name="Millburn G.H."/>
            <person name="Prochnik S.E."/>
            <person name="Smith C.D."/>
            <person name="Tupy J.L."/>
            <person name="Whitfield E.J."/>
            <person name="Bayraktaroglu L."/>
            <person name="Berman B.P."/>
            <person name="Bettencourt B.R."/>
            <person name="Celniker S.E."/>
            <person name="de Grey A.D.N.J."/>
            <person name="Drysdale R.A."/>
            <person name="Harris N.L."/>
            <person name="Richter J."/>
            <person name="Russo S."/>
            <person name="Schroeder A.J."/>
            <person name="Shu S.Q."/>
            <person name="Stapleton M."/>
            <person name="Yamada C."/>
            <person name="Ashburner M."/>
            <person name="Gelbart W.M."/>
            <person name="Rubin G.M."/>
            <person name="Lewis S.E."/>
        </authorList>
    </citation>
    <scope>GENOME REANNOTATION</scope>
    <source>
        <strain>Berkeley</strain>
    </source>
</reference>
<reference key="4">
    <citation type="journal article" date="2002" name="Genome Biol.">
        <title>A Drosophila full-length cDNA resource.</title>
        <authorList>
            <person name="Stapleton M."/>
            <person name="Carlson J.W."/>
            <person name="Brokstein P."/>
            <person name="Yu C."/>
            <person name="Champe M."/>
            <person name="George R.A."/>
            <person name="Guarin H."/>
            <person name="Kronmiller B."/>
            <person name="Pacleb J.M."/>
            <person name="Park S."/>
            <person name="Wan K.H."/>
            <person name="Rubin G.M."/>
            <person name="Celniker S.E."/>
        </authorList>
    </citation>
    <scope>NUCLEOTIDE SEQUENCE [LARGE SCALE MRNA]</scope>
    <source>
        <strain>Berkeley</strain>
        <tissue>Embryo</tissue>
    </source>
</reference>
<reference key="5">
    <citation type="journal article" date="2023" name="Sci. Adv.">
        <title>H/ACA snRNP-dependent ribosome biogenesis regulates translation of polyglutamine proteins.</title>
        <authorList>
            <person name="Breznak S.M."/>
            <person name="Peng Y."/>
            <person name="Deng L."/>
            <person name="Kotb N.M."/>
            <person name="Flamholz Z."/>
            <person name="Rapisarda I.T."/>
            <person name="Martin E.T."/>
            <person name="LaBarge K.A."/>
            <person name="Fabris D."/>
            <person name="Gavis E.R."/>
            <person name="Rangan P."/>
        </authorList>
    </citation>
    <scope>FUNCTION</scope>
    <scope>SUBUNIT</scope>
    <scope>DISRUPTION PHENOTYPE</scope>
</reference>
<sequence>MGFGKPRGGGGGGGRGFGGGGGGGGRGFGGGGGGRGGGGGRGGGGGFGRGGGGRGGGRGAFDTGPPERVIPLGNYVYSCQNDLVCKVDIQDVPYFNAPIFLENKEQVGKIDEIFGTVRDYSVSIKLSDNVYANSFKPNQKLFIDPGKLLPIARFLPKPPQPKGAKKAFTNNRGGGGGGGGFGGRGGGRGGGGRGGGGGRGGGGFRGGAGRNGGGGGGGGFNRGRGGGGGGGGGRGRW</sequence>
<organism evidence="9">
    <name type="scientific">Drosophila melanogaster</name>
    <name type="common">Fruit fly</name>
    <dbReference type="NCBI Taxonomy" id="7227"/>
    <lineage>
        <taxon>Eukaryota</taxon>
        <taxon>Metazoa</taxon>
        <taxon>Ecdysozoa</taxon>
        <taxon>Arthropoda</taxon>
        <taxon>Hexapoda</taxon>
        <taxon>Insecta</taxon>
        <taxon>Pterygota</taxon>
        <taxon>Neoptera</taxon>
        <taxon>Endopterygota</taxon>
        <taxon>Diptera</taxon>
        <taxon>Brachycera</taxon>
        <taxon>Muscomorpha</taxon>
        <taxon>Ephydroidea</taxon>
        <taxon>Drosophilidae</taxon>
        <taxon>Drosophila</taxon>
        <taxon>Sophophora</taxon>
    </lineage>
</organism>
<proteinExistence type="evidence at protein level"/>
<protein>
    <recommendedName>
        <fullName evidence="6">H/ACA ribonucleoprotein complex subunit 1</fullName>
    </recommendedName>
    <alternativeName>
        <fullName>GCR 101 snRNP</fullName>
    </alternativeName>
    <alternativeName>
        <fullName>Nucleolar protein family A member 1</fullName>
    </alternativeName>
    <alternativeName>
        <fullName evidence="8">Ribonucleoprotein Gar1</fullName>
    </alternativeName>
</protein>
<name>GAR1_DROME</name>
<feature type="chain" id="PRO_0000208559" description="H/ACA ribonucleoprotein complex subunit 1">
    <location>
        <begin position="1"/>
        <end position="237"/>
    </location>
</feature>
<feature type="region of interest" description="Disordered" evidence="3">
    <location>
        <begin position="1"/>
        <end position="64"/>
    </location>
</feature>
<feature type="region of interest" description="RGG-box 1">
    <location>
        <begin position="4"/>
        <end position="56"/>
    </location>
</feature>
<feature type="region of interest" description="Disordered" evidence="3">
    <location>
        <begin position="157"/>
        <end position="237"/>
    </location>
</feature>
<feature type="region of interest" description="RGG-box 2">
    <location>
        <begin position="166"/>
        <end position="236"/>
    </location>
</feature>
<feature type="compositionally biased region" description="Gly residues" evidence="3">
    <location>
        <begin position="1"/>
        <end position="59"/>
    </location>
</feature>
<feature type="compositionally biased region" description="Gly residues" evidence="3">
    <location>
        <begin position="172"/>
        <end position="237"/>
    </location>
</feature>
<feature type="sequence conflict" description="In Ref. 1; CAA50795." evidence="6" ref="1">
    <location>
        <begin position="18"/>
        <end position="19"/>
    </location>
</feature>
<feature type="sequence conflict" description="In Ref. 1; CAA50795." evidence="6" ref="1">
    <original>F</original>
    <variation>V</variation>
    <location>
        <position position="100"/>
    </location>
</feature>
<feature type="sequence conflict" description="In Ref. 1; CAA50795." evidence="6" ref="1">
    <original>N</original>
    <variation>K</variation>
    <location>
        <position position="138"/>
    </location>
</feature>
<feature type="sequence conflict" description="In Ref. 1; CAA50795." evidence="6" ref="1">
    <original>G</original>
    <variation>GRGG</variation>
    <location>
        <position position="186"/>
    </location>
</feature>
<feature type="sequence conflict" description="In Ref. 1; CAA50795." evidence="6" ref="1">
    <original>G</original>
    <variation>GG</variation>
    <location>
        <position position="219"/>
    </location>
</feature>
<gene>
    <name evidence="5 8" type="primary">Gar1</name>
    <name evidence="8" type="ORF">CG4038</name>
</gene>
<dbReference type="EMBL" id="X71975">
    <property type="protein sequence ID" value="CAA50795.1"/>
    <property type="molecule type" value="mRNA"/>
</dbReference>
<dbReference type="EMBL" id="AE013599">
    <property type="protein sequence ID" value="AAF46672.1"/>
    <property type="molecule type" value="Genomic_DNA"/>
</dbReference>
<dbReference type="EMBL" id="AY075501">
    <property type="protein sequence ID" value="AAO39496.1"/>
    <property type="status" value="ALT_FRAME"/>
    <property type="molecule type" value="mRNA"/>
</dbReference>
<dbReference type="PIR" id="S49193">
    <property type="entry name" value="S49193"/>
</dbReference>
<dbReference type="RefSeq" id="NP_477043.1">
    <property type="nucleotide sequence ID" value="NM_057695.4"/>
</dbReference>
<dbReference type="SMR" id="Q7KVQ0"/>
<dbReference type="BioGRID" id="63034">
    <property type="interactions" value="19"/>
</dbReference>
<dbReference type="ComplexPortal" id="CPX-2675">
    <property type="entry name" value="Box H/ACA ribonucleoprotein complex"/>
</dbReference>
<dbReference type="FunCoup" id="Q7KVQ0">
    <property type="interactions" value="108"/>
</dbReference>
<dbReference type="IntAct" id="Q7KVQ0">
    <property type="interactions" value="86"/>
</dbReference>
<dbReference type="STRING" id="7227.FBpp0071562"/>
<dbReference type="PaxDb" id="7227-FBpp0071562"/>
<dbReference type="DNASU" id="37397"/>
<dbReference type="EnsemblMetazoa" id="FBtr0071639">
    <property type="protein sequence ID" value="FBpp0071562"/>
    <property type="gene ID" value="FBgn0011824"/>
</dbReference>
<dbReference type="GeneID" id="37397"/>
<dbReference type="KEGG" id="dme:Dmel_CG4038"/>
<dbReference type="AGR" id="FB:FBgn0011824"/>
<dbReference type="CTD" id="54433"/>
<dbReference type="FlyBase" id="FBgn0011824">
    <property type="gene designation" value="Gar1"/>
</dbReference>
<dbReference type="VEuPathDB" id="VectorBase:FBgn0011824"/>
<dbReference type="eggNOG" id="KOG3262">
    <property type="taxonomic scope" value="Eukaryota"/>
</dbReference>
<dbReference type="GeneTree" id="ENSGT00730000111223"/>
<dbReference type="HOGENOM" id="CLU_080002_0_1_1"/>
<dbReference type="InParanoid" id="Q7KVQ0"/>
<dbReference type="OMA" id="YFTHPCE"/>
<dbReference type="OrthoDB" id="2187159at2759"/>
<dbReference type="PhylomeDB" id="Q7KVQ0"/>
<dbReference type="BioGRID-ORCS" id="37397">
    <property type="hits" value="0 hits in 1 CRISPR screen"/>
</dbReference>
<dbReference type="GenomeRNAi" id="37397"/>
<dbReference type="PRO" id="PR:Q7KVQ0"/>
<dbReference type="Proteomes" id="UP000000803">
    <property type="component" value="Chromosome 2R"/>
</dbReference>
<dbReference type="Bgee" id="FBgn0011824">
    <property type="expression patterns" value="Expressed in adult enteroendocrine precursor cell in adult midgut (Drosophila) and 150 other cell types or tissues"/>
</dbReference>
<dbReference type="ExpressionAtlas" id="Q7KVQ0">
    <property type="expression patterns" value="baseline and differential"/>
</dbReference>
<dbReference type="GO" id="GO:0031429">
    <property type="term" value="C:box H/ACA snoRNP complex"/>
    <property type="evidence" value="ECO:0000318"/>
    <property type="project" value="GO_Central"/>
</dbReference>
<dbReference type="GO" id="GO:0005730">
    <property type="term" value="C:nucleolus"/>
    <property type="evidence" value="ECO:0007005"/>
    <property type="project" value="FlyBase"/>
</dbReference>
<dbReference type="GO" id="GO:0005654">
    <property type="term" value="C:nucleoplasm"/>
    <property type="evidence" value="ECO:0007005"/>
    <property type="project" value="FlyBase"/>
</dbReference>
<dbReference type="GO" id="GO:0005732">
    <property type="term" value="C:sno(s)RNA-containing ribonucleoprotein complex"/>
    <property type="evidence" value="ECO:0000250"/>
    <property type="project" value="UniProtKB"/>
</dbReference>
<dbReference type="GO" id="GO:0034513">
    <property type="term" value="F:box H/ACA snoRNA binding"/>
    <property type="evidence" value="ECO:0000318"/>
    <property type="project" value="GO_Central"/>
</dbReference>
<dbReference type="GO" id="GO:0031118">
    <property type="term" value="P:rRNA pseudouridine synthesis"/>
    <property type="evidence" value="ECO:0000250"/>
    <property type="project" value="UniProtKB"/>
</dbReference>
<dbReference type="GO" id="GO:0000454">
    <property type="term" value="P:snoRNA guided rRNA pseudouridine synthesis"/>
    <property type="evidence" value="ECO:0000318"/>
    <property type="project" value="GO_Central"/>
</dbReference>
<dbReference type="FunFam" id="2.40.10.230:FF:000001">
    <property type="entry name" value="H/ACA ribonucleoprotein complex subunit"/>
    <property type="match status" value="1"/>
</dbReference>
<dbReference type="Gene3D" id="2.40.10.230">
    <property type="entry name" value="Probable tRNA pseudouridine synthase domain"/>
    <property type="match status" value="1"/>
</dbReference>
<dbReference type="InterPro" id="IPR038664">
    <property type="entry name" value="Gar1/Naf1_Cbf5-bd_sf"/>
</dbReference>
<dbReference type="InterPro" id="IPR007504">
    <property type="entry name" value="H/ACA_rnp_Gar1/Naf1"/>
</dbReference>
<dbReference type="InterPro" id="IPR009000">
    <property type="entry name" value="Transl_B-barrel_sf"/>
</dbReference>
<dbReference type="PANTHER" id="PTHR23237:SF6">
    <property type="entry name" value="H_ACA RIBONUCLEOPROTEIN COMPLEX SUBUNIT 1"/>
    <property type="match status" value="1"/>
</dbReference>
<dbReference type="PANTHER" id="PTHR23237">
    <property type="entry name" value="NUCLEOLAR PROTEIN FAMILY A MEMBER 1 SNORNP PROTEIN GAR1"/>
    <property type="match status" value="1"/>
</dbReference>
<dbReference type="Pfam" id="PF04410">
    <property type="entry name" value="Gar1"/>
    <property type="match status" value="1"/>
</dbReference>
<dbReference type="SUPFAM" id="SSF50447">
    <property type="entry name" value="Translation proteins"/>
    <property type="match status" value="1"/>
</dbReference>
<comment type="function">
    <text evidence="2 4 6 7">Component of the box H/ACA small nucleolar ribonucleoprotein (H/ACA snoRNP) complex, which catalyzes pseudouridylation of rRNA (Probable). This involves the isomerization of uridine such that the ribose is subsequently attached to C5, instead of the normal N1 (Probable). Pseudouridine ('psi') residues may serve to stabilize the conformation of rRNAs (Probable). Required for ribosome biogenesis (By similarity). H/ACA snoRNP complex-dependent ribosome biogenesis is important in female germline cell differentiation during oogenesis (PubMed:37343092).</text>
</comment>
<comment type="subunit">
    <text evidence="7">Component of the box H/ACA small nucleolar ribonucleoprotein (H/ACA snoRNP) complex consisting of Nop60B, Gar1, NPH2 and Nop10, and associated with H/ACA-type snoRNAs.</text>
</comment>
<comment type="subcellular location">
    <subcellularLocation>
        <location evidence="1">Nucleus</location>
        <location evidence="1">Nucleolus</location>
    </subcellularLocation>
</comment>
<comment type="disruption phenotype">
    <text evidence="4">RNAi-mediated knockdown in female germline cells results in a cyst differentiation defect that prevents progression from the 8-cell cyst stage and oocyte differentiation.</text>
</comment>
<comment type="similarity">
    <text evidence="6">Belongs to the GAR1 family.</text>
</comment>
<comment type="sequence caution" evidence="6">
    <conflict type="frameshift">
        <sequence resource="EMBL-CDS" id="AAO39496"/>
    </conflict>
</comment>
<accession>Q7KVQ0</accession>
<accession>Q24345</accession>
<accession>Q86R95</accession>
<accession>Q9W2L8</accession>